<name>NDUS1_BOVIN</name>
<accession>P15690</accession>
<accession>Q0VCP7</accession>
<dbReference type="EC" id="7.1.1.2" evidence="1"/>
<dbReference type="EMBL" id="J02877">
    <property type="protein sequence ID" value="AAA30662.1"/>
    <property type="molecule type" value="mRNA"/>
</dbReference>
<dbReference type="EMBL" id="BC120069">
    <property type="protein sequence ID" value="AAI20070.1"/>
    <property type="molecule type" value="mRNA"/>
</dbReference>
<dbReference type="PIR" id="A33552">
    <property type="entry name" value="A33552"/>
</dbReference>
<dbReference type="RefSeq" id="NP_777245.1">
    <property type="nucleotide sequence ID" value="NM_174820.4"/>
</dbReference>
<dbReference type="RefSeq" id="XP_005202770.1">
    <property type="nucleotide sequence ID" value="XM_005202713.5"/>
</dbReference>
<dbReference type="RefSeq" id="XP_024854963.1">
    <property type="nucleotide sequence ID" value="XM_024999195.2"/>
</dbReference>
<dbReference type="PDB" id="5LC5">
    <property type="method" value="EM"/>
    <property type="resolution" value="4.35 A"/>
    <property type="chains" value="G=1-232"/>
</dbReference>
<dbReference type="PDB" id="5LDW">
    <property type="method" value="EM"/>
    <property type="resolution" value="4.27 A"/>
    <property type="chains" value="G=31-232"/>
</dbReference>
<dbReference type="PDB" id="5LDX">
    <property type="method" value="EM"/>
    <property type="resolution" value="5.60 A"/>
    <property type="chains" value="G=31-232"/>
</dbReference>
<dbReference type="PDB" id="5O31">
    <property type="method" value="EM"/>
    <property type="resolution" value="4.13 A"/>
    <property type="chains" value="G=24-727"/>
</dbReference>
<dbReference type="PDB" id="7DGQ">
    <property type="method" value="EM"/>
    <property type="resolution" value="5.00 A"/>
    <property type="chains" value="A=24-727"/>
</dbReference>
<dbReference type="PDB" id="7DGR">
    <property type="method" value="EM"/>
    <property type="resolution" value="4.60 A"/>
    <property type="chains" value="A=24-727"/>
</dbReference>
<dbReference type="PDB" id="7DGS">
    <property type="method" value="EM"/>
    <property type="resolution" value="7.80 A"/>
    <property type="chains" value="A=24-727"/>
</dbReference>
<dbReference type="PDB" id="7DGZ">
    <property type="method" value="EM"/>
    <property type="resolution" value="3.80 A"/>
    <property type="chains" value="A=24-727"/>
</dbReference>
<dbReference type="PDB" id="7DH0">
    <property type="method" value="EM"/>
    <property type="resolution" value="4.20 A"/>
    <property type="chains" value="A=24-727"/>
</dbReference>
<dbReference type="PDB" id="7DKF">
    <property type="method" value="EM"/>
    <property type="resolution" value="8.30 A"/>
    <property type="chains" value="A2=24-727"/>
</dbReference>
<dbReference type="PDB" id="7QSD">
    <property type="method" value="EM"/>
    <property type="resolution" value="3.10 A"/>
    <property type="chains" value="G=1-727"/>
</dbReference>
<dbReference type="PDB" id="7QSK">
    <property type="method" value="EM"/>
    <property type="resolution" value="2.84 A"/>
    <property type="chains" value="G=1-727"/>
</dbReference>
<dbReference type="PDB" id="7QSL">
    <property type="method" value="EM"/>
    <property type="resolution" value="2.76 A"/>
    <property type="chains" value="G=1-727"/>
</dbReference>
<dbReference type="PDB" id="7QSM">
    <property type="method" value="EM"/>
    <property type="resolution" value="2.30 A"/>
    <property type="chains" value="G=1-727"/>
</dbReference>
<dbReference type="PDB" id="7QSN">
    <property type="method" value="EM"/>
    <property type="resolution" value="2.81 A"/>
    <property type="chains" value="G=1-727"/>
</dbReference>
<dbReference type="PDB" id="7QSO">
    <property type="method" value="EM"/>
    <property type="resolution" value="3.02 A"/>
    <property type="chains" value="G=1-727"/>
</dbReference>
<dbReference type="PDB" id="7R41">
    <property type="method" value="EM"/>
    <property type="resolution" value="2.30 A"/>
    <property type="chains" value="G=1-727"/>
</dbReference>
<dbReference type="PDB" id="7R42">
    <property type="method" value="EM"/>
    <property type="resolution" value="2.30 A"/>
    <property type="chains" value="G=1-727"/>
</dbReference>
<dbReference type="PDB" id="7R43">
    <property type="method" value="EM"/>
    <property type="resolution" value="2.40 A"/>
    <property type="chains" value="G=1-727"/>
</dbReference>
<dbReference type="PDB" id="7R44">
    <property type="method" value="EM"/>
    <property type="resolution" value="2.40 A"/>
    <property type="chains" value="G=1-727"/>
</dbReference>
<dbReference type="PDB" id="7R45">
    <property type="method" value="EM"/>
    <property type="resolution" value="2.40 A"/>
    <property type="chains" value="G=1-727"/>
</dbReference>
<dbReference type="PDB" id="7R46">
    <property type="method" value="EM"/>
    <property type="resolution" value="2.40 A"/>
    <property type="chains" value="G=1-727"/>
</dbReference>
<dbReference type="PDB" id="7R47">
    <property type="method" value="EM"/>
    <property type="resolution" value="2.30 A"/>
    <property type="chains" value="G=1-727"/>
</dbReference>
<dbReference type="PDB" id="7R48">
    <property type="method" value="EM"/>
    <property type="resolution" value="2.30 A"/>
    <property type="chains" value="G=1-727"/>
</dbReference>
<dbReference type="PDB" id="7R4C">
    <property type="method" value="EM"/>
    <property type="resolution" value="2.30 A"/>
    <property type="chains" value="G=1-727"/>
</dbReference>
<dbReference type="PDB" id="7R4D">
    <property type="method" value="EM"/>
    <property type="resolution" value="2.30 A"/>
    <property type="chains" value="G=1-727"/>
</dbReference>
<dbReference type="PDB" id="7R4F">
    <property type="method" value="EM"/>
    <property type="resolution" value="2.40 A"/>
    <property type="chains" value="G=1-727"/>
</dbReference>
<dbReference type="PDB" id="7R4G">
    <property type="method" value="EM"/>
    <property type="resolution" value="2.50 A"/>
    <property type="chains" value="G=1-727"/>
</dbReference>
<dbReference type="PDB" id="8Q0A">
    <property type="method" value="EM"/>
    <property type="resolution" value="3.10 A"/>
    <property type="chains" value="G=1-727"/>
</dbReference>
<dbReference type="PDB" id="8Q0F">
    <property type="method" value="EM"/>
    <property type="resolution" value="3.10 A"/>
    <property type="chains" value="G=1-727"/>
</dbReference>
<dbReference type="PDB" id="8Q0J">
    <property type="method" value="EM"/>
    <property type="resolution" value="3.80 A"/>
    <property type="chains" value="G=1-727"/>
</dbReference>
<dbReference type="PDB" id="8Q0M">
    <property type="method" value="EM"/>
    <property type="resolution" value="3.10 A"/>
    <property type="chains" value="G=1-727"/>
</dbReference>
<dbReference type="PDB" id="8Q0O">
    <property type="method" value="EM"/>
    <property type="resolution" value="3.10 A"/>
    <property type="chains" value="G=1-727"/>
</dbReference>
<dbReference type="PDB" id="8Q0Q">
    <property type="method" value="EM"/>
    <property type="resolution" value="3.60 A"/>
    <property type="chains" value="G=1-727"/>
</dbReference>
<dbReference type="PDB" id="8Q1P">
    <property type="method" value="EM"/>
    <property type="resolution" value="2.90 A"/>
    <property type="chains" value="G=1-727"/>
</dbReference>
<dbReference type="PDB" id="8Q1U">
    <property type="method" value="EM"/>
    <property type="resolution" value="3.30 A"/>
    <property type="chains" value="G=1-727"/>
</dbReference>
<dbReference type="PDB" id="8Q1Y">
    <property type="method" value="EM"/>
    <property type="resolution" value="2.60 A"/>
    <property type="chains" value="G=1-727"/>
</dbReference>
<dbReference type="PDB" id="8Q25">
    <property type="method" value="EM"/>
    <property type="resolution" value="2.80 A"/>
    <property type="chains" value="G=1-727"/>
</dbReference>
<dbReference type="PDB" id="8Q45">
    <property type="method" value="EM"/>
    <property type="resolution" value="2.70 A"/>
    <property type="chains" value="G=1-727"/>
</dbReference>
<dbReference type="PDB" id="8Q46">
    <property type="method" value="EM"/>
    <property type="resolution" value="2.60 A"/>
    <property type="chains" value="G=1-727"/>
</dbReference>
<dbReference type="PDB" id="8Q47">
    <property type="method" value="EM"/>
    <property type="resolution" value="2.90 A"/>
    <property type="chains" value="G=1-727"/>
</dbReference>
<dbReference type="PDB" id="8Q48">
    <property type="method" value="EM"/>
    <property type="resolution" value="2.50 A"/>
    <property type="chains" value="G=1-727"/>
</dbReference>
<dbReference type="PDB" id="8Q49">
    <property type="method" value="EM"/>
    <property type="resolution" value="2.60 A"/>
    <property type="chains" value="G=1-727"/>
</dbReference>
<dbReference type="PDB" id="8Q4A">
    <property type="method" value="EM"/>
    <property type="resolution" value="2.60 A"/>
    <property type="chains" value="G=1-727"/>
</dbReference>
<dbReference type="PDBsum" id="5LC5"/>
<dbReference type="PDBsum" id="5LDW"/>
<dbReference type="PDBsum" id="5LDX"/>
<dbReference type="PDBsum" id="5O31"/>
<dbReference type="PDBsum" id="7DGQ"/>
<dbReference type="PDBsum" id="7DGR"/>
<dbReference type="PDBsum" id="7DGS"/>
<dbReference type="PDBsum" id="7DGZ"/>
<dbReference type="PDBsum" id="7DH0"/>
<dbReference type="PDBsum" id="7DKF"/>
<dbReference type="PDBsum" id="7QSD"/>
<dbReference type="PDBsum" id="7QSK"/>
<dbReference type="PDBsum" id="7QSL"/>
<dbReference type="PDBsum" id="7QSM"/>
<dbReference type="PDBsum" id="7QSN"/>
<dbReference type="PDBsum" id="7QSO"/>
<dbReference type="PDBsum" id="7R41"/>
<dbReference type="PDBsum" id="7R42"/>
<dbReference type="PDBsum" id="7R43"/>
<dbReference type="PDBsum" id="7R44"/>
<dbReference type="PDBsum" id="7R45"/>
<dbReference type="PDBsum" id="7R46"/>
<dbReference type="PDBsum" id="7R47"/>
<dbReference type="PDBsum" id="7R48"/>
<dbReference type="PDBsum" id="7R4C"/>
<dbReference type="PDBsum" id="7R4D"/>
<dbReference type="PDBsum" id="7R4F"/>
<dbReference type="PDBsum" id="7R4G"/>
<dbReference type="PDBsum" id="8Q0A"/>
<dbReference type="PDBsum" id="8Q0F"/>
<dbReference type="PDBsum" id="8Q0J"/>
<dbReference type="PDBsum" id="8Q0M"/>
<dbReference type="PDBsum" id="8Q0O"/>
<dbReference type="PDBsum" id="8Q0Q"/>
<dbReference type="PDBsum" id="8Q1P"/>
<dbReference type="PDBsum" id="8Q1U"/>
<dbReference type="PDBsum" id="8Q1Y"/>
<dbReference type="PDBsum" id="8Q25"/>
<dbReference type="PDBsum" id="8Q45"/>
<dbReference type="PDBsum" id="8Q46"/>
<dbReference type="PDBsum" id="8Q47"/>
<dbReference type="PDBsum" id="8Q48"/>
<dbReference type="PDBsum" id="8Q49"/>
<dbReference type="PDBsum" id="8Q4A"/>
<dbReference type="EMDB" id="EMD-14127"/>
<dbReference type="EMDB" id="EMD-14132"/>
<dbReference type="EMDB" id="EMD-14133"/>
<dbReference type="EMDB" id="EMD-14134"/>
<dbReference type="EMDB" id="EMD-14139"/>
<dbReference type="EMDB" id="EMD-14140"/>
<dbReference type="EMDB" id="EMD-14251"/>
<dbReference type="EMDB" id="EMD-14256"/>
<dbReference type="EMDB" id="EMD-14261"/>
<dbReference type="EMDB" id="EMD-14266"/>
<dbReference type="EMDB" id="EMD-14272"/>
<dbReference type="EMDB" id="EMD-14277"/>
<dbReference type="EMDB" id="EMD-14282"/>
<dbReference type="EMDB" id="EMD-14287"/>
<dbReference type="EMDB" id="EMD-14292"/>
<dbReference type="EMDB" id="EMD-14297"/>
<dbReference type="EMDB" id="EMD-14302"/>
<dbReference type="EMDB" id="EMD-14307"/>
<dbReference type="EMDB" id="EMD-18051"/>
<dbReference type="EMDB" id="EMD-18052"/>
<dbReference type="EMDB" id="EMD-18054"/>
<dbReference type="EMDB" id="EMD-18055"/>
<dbReference type="EMDB" id="EMD-18057"/>
<dbReference type="EMDB" id="EMD-18059"/>
<dbReference type="EMDB" id="EMD-18066"/>
<dbReference type="EMDB" id="EMD-18067"/>
<dbReference type="EMDB" id="EMD-18068"/>
<dbReference type="EMDB" id="EMD-18069"/>
<dbReference type="EMDB" id="EMD-18138"/>
<dbReference type="EMDB" id="EMD-18139"/>
<dbReference type="EMDB" id="EMD-18140"/>
<dbReference type="EMDB" id="EMD-18141"/>
<dbReference type="EMDB" id="EMD-18142"/>
<dbReference type="EMDB" id="EMD-18143"/>
<dbReference type="EMDB" id="EMD-30673"/>
<dbReference type="EMDB" id="EMD-30674"/>
<dbReference type="EMDB" id="EMD-30675"/>
<dbReference type="EMDB" id="EMD-30676"/>
<dbReference type="EMDB" id="EMD-30677"/>
<dbReference type="EMDB" id="EMD-30706"/>
<dbReference type="EMDB" id="EMD-3731"/>
<dbReference type="EMDB" id="EMD-4032"/>
<dbReference type="EMDB" id="EMD-4040"/>
<dbReference type="EMDB" id="EMD-4041"/>
<dbReference type="SMR" id="P15690"/>
<dbReference type="CORUM" id="P15690"/>
<dbReference type="DIP" id="DIP-38804N"/>
<dbReference type="FunCoup" id="P15690">
    <property type="interactions" value="2617"/>
</dbReference>
<dbReference type="IntAct" id="P15690">
    <property type="interactions" value="6"/>
</dbReference>
<dbReference type="STRING" id="9913.ENSBTAP00000029301"/>
<dbReference type="TCDB" id="3.D.1.6.1">
    <property type="family name" value="the h+ or na+-translocating nadh dehydrogenase (ndh) family"/>
</dbReference>
<dbReference type="PaxDb" id="9913-ENSBTAP00000029301"/>
<dbReference type="PeptideAtlas" id="P15690"/>
<dbReference type="Ensembl" id="ENSBTAT00000029301.4">
    <property type="protein sequence ID" value="ENSBTAP00000029301.3"/>
    <property type="gene ID" value="ENSBTAG00000021976.5"/>
</dbReference>
<dbReference type="GeneID" id="288380"/>
<dbReference type="KEGG" id="bta:288380"/>
<dbReference type="CTD" id="4719"/>
<dbReference type="VEuPathDB" id="HostDB:ENSBTAG00000021976"/>
<dbReference type="VGNC" id="VGNC:56131">
    <property type="gene designation" value="NDUFS1"/>
</dbReference>
<dbReference type="eggNOG" id="KOG2282">
    <property type="taxonomic scope" value="Eukaryota"/>
</dbReference>
<dbReference type="GeneTree" id="ENSGT00940000153514"/>
<dbReference type="HOGENOM" id="CLU_000422_11_6_1"/>
<dbReference type="InParanoid" id="P15690"/>
<dbReference type="OMA" id="QAMAYGV"/>
<dbReference type="OrthoDB" id="10249365at2759"/>
<dbReference type="TreeFam" id="TF105756"/>
<dbReference type="Reactome" id="R-BTA-611105">
    <property type="pathway name" value="Respiratory electron transport"/>
</dbReference>
<dbReference type="Reactome" id="R-BTA-6799198">
    <property type="pathway name" value="Complex I biogenesis"/>
</dbReference>
<dbReference type="Reactome" id="R-BTA-9837999">
    <property type="pathway name" value="Mitochondrial protein degradation"/>
</dbReference>
<dbReference type="Proteomes" id="UP000009136">
    <property type="component" value="Chromosome 2"/>
</dbReference>
<dbReference type="Bgee" id="ENSBTAG00000021976">
    <property type="expression patterns" value="Expressed in cardiac ventricle and 105 other cell types or tissues"/>
</dbReference>
<dbReference type="GO" id="GO:0005743">
    <property type="term" value="C:mitochondrial inner membrane"/>
    <property type="evidence" value="ECO:0000314"/>
    <property type="project" value="UniProtKB"/>
</dbReference>
<dbReference type="GO" id="GO:0005758">
    <property type="term" value="C:mitochondrial intermembrane space"/>
    <property type="evidence" value="ECO:0000250"/>
    <property type="project" value="UniProtKB"/>
</dbReference>
<dbReference type="GO" id="GO:0005739">
    <property type="term" value="C:mitochondrion"/>
    <property type="evidence" value="ECO:0000250"/>
    <property type="project" value="AgBase"/>
</dbReference>
<dbReference type="GO" id="GO:0045271">
    <property type="term" value="C:respiratory chain complex I"/>
    <property type="evidence" value="ECO:0000314"/>
    <property type="project" value="UniProtKB"/>
</dbReference>
<dbReference type="GO" id="GO:0051537">
    <property type="term" value="F:2 iron, 2 sulfur cluster binding"/>
    <property type="evidence" value="ECO:0007669"/>
    <property type="project" value="UniProtKB-KW"/>
</dbReference>
<dbReference type="GO" id="GO:0051539">
    <property type="term" value="F:4 iron, 4 sulfur cluster binding"/>
    <property type="evidence" value="ECO:0007669"/>
    <property type="project" value="UniProtKB-KW"/>
</dbReference>
<dbReference type="GO" id="GO:0046872">
    <property type="term" value="F:metal ion binding"/>
    <property type="evidence" value="ECO:0007669"/>
    <property type="project" value="UniProtKB-KW"/>
</dbReference>
<dbReference type="GO" id="GO:0008137">
    <property type="term" value="F:NADH dehydrogenase (ubiquinone) activity"/>
    <property type="evidence" value="ECO:0000250"/>
    <property type="project" value="UniProtKB"/>
</dbReference>
<dbReference type="GO" id="GO:0006120">
    <property type="term" value="P:mitochondrial electron transport, NADH to ubiquinone"/>
    <property type="evidence" value="ECO:0000250"/>
    <property type="project" value="UniProtKB"/>
</dbReference>
<dbReference type="GO" id="GO:0032981">
    <property type="term" value="P:mitochondrial respiratory chain complex I assembly"/>
    <property type="evidence" value="ECO:0000250"/>
    <property type="project" value="UniProtKB"/>
</dbReference>
<dbReference type="CDD" id="cd00207">
    <property type="entry name" value="fer2"/>
    <property type="match status" value="1"/>
</dbReference>
<dbReference type="CDD" id="cd02773">
    <property type="entry name" value="MopB_Res-Cmplx1_Nad11"/>
    <property type="match status" value="1"/>
</dbReference>
<dbReference type="FunFam" id="3.10.20.740:FF:000001">
    <property type="entry name" value="NADH-quinone oxidoreductase subunit G"/>
    <property type="match status" value="1"/>
</dbReference>
<dbReference type="FunFam" id="3.30.200.210:FF:000002">
    <property type="entry name" value="NADH-ubiquinone oxidoreductase 75 kDa subunit"/>
    <property type="match status" value="1"/>
</dbReference>
<dbReference type="FunFam" id="3.30.70.20:FF:000002">
    <property type="entry name" value="NADH-ubiquinone oxidoreductase 75 kDa subunit"/>
    <property type="match status" value="1"/>
</dbReference>
<dbReference type="FunFam" id="3.40.50.740:FF:000002">
    <property type="entry name" value="NADH-ubiquinone oxidoreductase 75 kDa subunit, mitochondrial"/>
    <property type="match status" value="1"/>
</dbReference>
<dbReference type="Gene3D" id="3.10.20.740">
    <property type="match status" value="1"/>
</dbReference>
<dbReference type="Gene3D" id="3.30.200.210">
    <property type="match status" value="1"/>
</dbReference>
<dbReference type="Gene3D" id="3.30.70.20">
    <property type="match status" value="1"/>
</dbReference>
<dbReference type="Gene3D" id="3.40.50.740">
    <property type="match status" value="1"/>
</dbReference>
<dbReference type="InterPro" id="IPR036010">
    <property type="entry name" value="2Fe-2S_ferredoxin-like_sf"/>
</dbReference>
<dbReference type="InterPro" id="IPR001041">
    <property type="entry name" value="2Fe-2S_ferredoxin-type"/>
</dbReference>
<dbReference type="InterPro" id="IPR006656">
    <property type="entry name" value="Mopterin_OxRdtase"/>
</dbReference>
<dbReference type="InterPro" id="IPR006963">
    <property type="entry name" value="Mopterin_OxRdtase_4Fe-4S_dom"/>
</dbReference>
<dbReference type="InterPro" id="IPR000283">
    <property type="entry name" value="NADH_UbQ_OxRdtase_75kDa_su_CS"/>
</dbReference>
<dbReference type="InterPro" id="IPR054351">
    <property type="entry name" value="NADH_UbQ_OxRdtase_ferredoxin"/>
</dbReference>
<dbReference type="InterPro" id="IPR010228">
    <property type="entry name" value="NADH_UbQ_OxRdtase_Gsu"/>
</dbReference>
<dbReference type="InterPro" id="IPR019574">
    <property type="entry name" value="NADH_UbQ_OxRdtase_Gsu_4Fe4S-bd"/>
</dbReference>
<dbReference type="InterPro" id="IPR015405">
    <property type="entry name" value="NDUFS1-like_C"/>
</dbReference>
<dbReference type="InterPro" id="IPR050123">
    <property type="entry name" value="Prok_molybdopt-oxidoreductase"/>
</dbReference>
<dbReference type="NCBIfam" id="TIGR01973">
    <property type="entry name" value="NuoG"/>
    <property type="match status" value="1"/>
</dbReference>
<dbReference type="PANTHER" id="PTHR43105:SF13">
    <property type="entry name" value="NADH-UBIQUINONE OXIDOREDUCTASE 75 KDA SUBUNIT, MITOCHONDRIAL"/>
    <property type="match status" value="1"/>
</dbReference>
<dbReference type="PANTHER" id="PTHR43105">
    <property type="entry name" value="RESPIRATORY NITRATE REDUCTASE"/>
    <property type="match status" value="1"/>
</dbReference>
<dbReference type="Pfam" id="PF13510">
    <property type="entry name" value="Fer2_4"/>
    <property type="match status" value="1"/>
</dbReference>
<dbReference type="Pfam" id="PF22151">
    <property type="entry name" value="Fer4_NDSU1"/>
    <property type="match status" value="1"/>
</dbReference>
<dbReference type="Pfam" id="PF22117">
    <property type="entry name" value="Fer4_Nqo3"/>
    <property type="match status" value="1"/>
</dbReference>
<dbReference type="Pfam" id="PF00384">
    <property type="entry name" value="Molybdopterin"/>
    <property type="match status" value="1"/>
</dbReference>
<dbReference type="Pfam" id="PF10588">
    <property type="entry name" value="NADH-G_4Fe-4S_3"/>
    <property type="match status" value="1"/>
</dbReference>
<dbReference type="Pfam" id="PF09326">
    <property type="entry name" value="NADH_dhqG_C"/>
    <property type="match status" value="1"/>
</dbReference>
<dbReference type="SMART" id="SM00929">
    <property type="entry name" value="NADH-G_4Fe-4S_3"/>
    <property type="match status" value="1"/>
</dbReference>
<dbReference type="SUPFAM" id="SSF54292">
    <property type="entry name" value="2Fe-2S ferredoxin-like"/>
    <property type="match status" value="1"/>
</dbReference>
<dbReference type="SUPFAM" id="SSF54862">
    <property type="entry name" value="4Fe-4S ferredoxins"/>
    <property type="match status" value="1"/>
</dbReference>
<dbReference type="SUPFAM" id="SSF53706">
    <property type="entry name" value="Formate dehydrogenase/DMSO reductase, domains 1-3"/>
    <property type="match status" value="1"/>
</dbReference>
<dbReference type="PROSITE" id="PS51085">
    <property type="entry name" value="2FE2S_FER_2"/>
    <property type="match status" value="1"/>
</dbReference>
<dbReference type="PROSITE" id="PS51839">
    <property type="entry name" value="4FE4S_HC3"/>
    <property type="match status" value="1"/>
</dbReference>
<dbReference type="PROSITE" id="PS51669">
    <property type="entry name" value="4FE4S_MOW_BIS_MGD"/>
    <property type="match status" value="1"/>
</dbReference>
<dbReference type="PROSITE" id="PS00641">
    <property type="entry name" value="COMPLEX1_75K_1"/>
    <property type="match status" value="1"/>
</dbReference>
<dbReference type="PROSITE" id="PS00642">
    <property type="entry name" value="COMPLEX1_75K_2"/>
    <property type="match status" value="1"/>
</dbReference>
<dbReference type="PROSITE" id="PS00643">
    <property type="entry name" value="COMPLEX1_75K_3"/>
    <property type="match status" value="1"/>
</dbReference>
<keyword id="KW-0001">2Fe-2S</keyword>
<keyword id="KW-0002">3D-structure</keyword>
<keyword id="KW-0004">4Fe-4S</keyword>
<keyword id="KW-0007">Acetylation</keyword>
<keyword id="KW-0903">Direct protein sequencing</keyword>
<keyword id="KW-0249">Electron transport</keyword>
<keyword id="KW-0408">Iron</keyword>
<keyword id="KW-0411">Iron-sulfur</keyword>
<keyword id="KW-0472">Membrane</keyword>
<keyword id="KW-0479">Metal-binding</keyword>
<keyword id="KW-0496">Mitochondrion</keyword>
<keyword id="KW-0999">Mitochondrion inner membrane</keyword>
<keyword id="KW-0520">NAD</keyword>
<keyword id="KW-0560">Oxidoreductase</keyword>
<keyword id="KW-1185">Reference proteome</keyword>
<keyword id="KW-0679">Respiratory chain</keyword>
<keyword id="KW-0809">Transit peptide</keyword>
<keyword id="KW-1278">Translocase</keyword>
<keyword id="KW-0813">Transport</keyword>
<keyword id="KW-0830">Ubiquinone</keyword>
<protein>
    <recommendedName>
        <fullName>NADH-ubiquinone oxidoreductase 75 kDa subunit, mitochondrial</fullName>
        <ecNumber evidence="1">7.1.1.2</ecNumber>
    </recommendedName>
    <alternativeName>
        <fullName>Complex I-75kD</fullName>
        <shortName>CI-75kD</shortName>
    </alternativeName>
</protein>
<proteinExistence type="evidence at protein level"/>
<evidence type="ECO:0000250" key="1">
    <source>
        <dbReference type="UniProtKB" id="P28331"/>
    </source>
</evidence>
<evidence type="ECO:0000250" key="2">
    <source>
        <dbReference type="UniProtKB" id="Q56223"/>
    </source>
</evidence>
<evidence type="ECO:0000250" key="3">
    <source>
        <dbReference type="UniProtKB" id="Q91VD9"/>
    </source>
</evidence>
<evidence type="ECO:0000255" key="4">
    <source>
        <dbReference type="PROSITE-ProRule" id="PRU00465"/>
    </source>
</evidence>
<evidence type="ECO:0000255" key="5">
    <source>
        <dbReference type="PROSITE-ProRule" id="PRU01004"/>
    </source>
</evidence>
<evidence type="ECO:0000255" key="6">
    <source>
        <dbReference type="PROSITE-ProRule" id="PRU01184"/>
    </source>
</evidence>
<evidence type="ECO:0000269" key="7">
    <source>
    </source>
</evidence>
<evidence type="ECO:0000269" key="8">
    <source>
    </source>
</evidence>
<evidence type="ECO:0000269" key="9">
    <source>
    </source>
</evidence>
<evidence type="ECO:0000269" key="10">
    <source>
    </source>
</evidence>
<evidence type="ECO:0000305" key="11"/>
<evidence type="ECO:0000305" key="12">
    <source>
    </source>
</evidence>
<evidence type="ECO:0007829" key="13">
    <source>
        <dbReference type="PDB" id="7QSL"/>
    </source>
</evidence>
<evidence type="ECO:0007829" key="14">
    <source>
        <dbReference type="PDB" id="7QSM"/>
    </source>
</evidence>
<evidence type="ECO:0007829" key="15">
    <source>
        <dbReference type="PDB" id="7QSN"/>
    </source>
</evidence>
<evidence type="ECO:0007829" key="16">
    <source>
        <dbReference type="PDB" id="8Q0O"/>
    </source>
</evidence>
<evidence type="ECO:0007829" key="17">
    <source>
        <dbReference type="PDB" id="8Q1P"/>
    </source>
</evidence>
<evidence type="ECO:0007829" key="18">
    <source>
        <dbReference type="PDB" id="8Q1Y"/>
    </source>
</evidence>
<evidence type="ECO:0007829" key="19">
    <source>
        <dbReference type="PDB" id="8Q45"/>
    </source>
</evidence>
<evidence type="ECO:0007829" key="20">
    <source>
        <dbReference type="PDB" id="8Q46"/>
    </source>
</evidence>
<evidence type="ECO:0007829" key="21">
    <source>
        <dbReference type="PDB" id="8Q49"/>
    </source>
</evidence>
<gene>
    <name type="primary">NDUFS1</name>
</gene>
<feature type="transit peptide" description="Mitochondrion" evidence="9">
    <location>
        <begin position="1"/>
        <end position="23"/>
    </location>
</feature>
<feature type="chain" id="PRO_0000019967" description="NADH-ubiquinone oxidoreductase 75 kDa subunit, mitochondrial">
    <location>
        <begin position="24"/>
        <end position="727"/>
    </location>
</feature>
<feature type="domain" description="2Fe-2S ferredoxin-type" evidence="4">
    <location>
        <begin position="30"/>
        <end position="108"/>
    </location>
</feature>
<feature type="domain" description="4Fe-4S His(Cys)3-ligated-type" evidence="6">
    <location>
        <begin position="108"/>
        <end position="147"/>
    </location>
</feature>
<feature type="domain" description="4Fe-4S Mo/W bis-MGD-type" evidence="5">
    <location>
        <begin position="245"/>
        <end position="301"/>
    </location>
</feature>
<feature type="binding site" evidence="2">
    <location>
        <position position="64"/>
    </location>
    <ligand>
        <name>[2Fe-2S] cluster</name>
        <dbReference type="ChEBI" id="CHEBI:190135"/>
    </ligand>
</feature>
<feature type="binding site" evidence="2">
    <location>
        <position position="75"/>
    </location>
    <ligand>
        <name>[2Fe-2S] cluster</name>
        <dbReference type="ChEBI" id="CHEBI:190135"/>
    </ligand>
</feature>
<feature type="binding site" evidence="2">
    <location>
        <position position="78"/>
    </location>
    <ligand>
        <name>[2Fe-2S] cluster</name>
        <dbReference type="ChEBI" id="CHEBI:190135"/>
    </ligand>
</feature>
<feature type="binding site" evidence="2">
    <location>
        <position position="92"/>
    </location>
    <ligand>
        <name>[2Fe-2S] cluster</name>
        <dbReference type="ChEBI" id="CHEBI:190135"/>
    </ligand>
</feature>
<feature type="binding site" evidence="6">
    <location>
        <position position="124"/>
    </location>
    <ligand>
        <name>[4Fe-4S] cluster</name>
        <dbReference type="ChEBI" id="CHEBI:49883"/>
        <label>1</label>
    </ligand>
</feature>
<feature type="binding site" evidence="6">
    <location>
        <position position="128"/>
    </location>
    <ligand>
        <name>[4Fe-4S] cluster</name>
        <dbReference type="ChEBI" id="CHEBI:49883"/>
        <label>1</label>
    </ligand>
</feature>
<feature type="binding site" evidence="6">
    <location>
        <position position="131"/>
    </location>
    <ligand>
        <name>[4Fe-4S] cluster</name>
        <dbReference type="ChEBI" id="CHEBI:49883"/>
        <label>1</label>
    </ligand>
</feature>
<feature type="binding site" evidence="6">
    <location>
        <position position="137"/>
    </location>
    <ligand>
        <name>[4Fe-4S] cluster</name>
        <dbReference type="ChEBI" id="CHEBI:49883"/>
        <label>1</label>
    </ligand>
</feature>
<feature type="binding site" evidence="2">
    <location>
        <position position="176"/>
    </location>
    <ligand>
        <name>[4Fe-4S] cluster</name>
        <dbReference type="ChEBI" id="CHEBI:49883"/>
        <label>2</label>
    </ligand>
</feature>
<feature type="binding site" evidence="2">
    <location>
        <position position="179"/>
    </location>
    <ligand>
        <name>[4Fe-4S] cluster</name>
        <dbReference type="ChEBI" id="CHEBI:49883"/>
        <label>2</label>
    </ligand>
</feature>
<feature type="binding site" evidence="2">
    <location>
        <position position="182"/>
    </location>
    <ligand>
        <name>[4Fe-4S] cluster</name>
        <dbReference type="ChEBI" id="CHEBI:49883"/>
        <label>2</label>
    </ligand>
</feature>
<feature type="binding site" evidence="2">
    <location>
        <position position="226"/>
    </location>
    <ligand>
        <name>[4Fe-4S] cluster</name>
        <dbReference type="ChEBI" id="CHEBI:49883"/>
        <label>2</label>
    </ligand>
</feature>
<feature type="modified residue" description="N6-acetyllysine" evidence="3">
    <location>
        <position position="84"/>
    </location>
</feature>
<feature type="modified residue" description="N6-acetyllysine" evidence="3">
    <location>
        <position position="499"/>
    </location>
</feature>
<feature type="modified residue" description="N6-acetyllysine" evidence="3">
    <location>
        <position position="709"/>
    </location>
</feature>
<feature type="strand" evidence="14">
    <location>
        <begin position="32"/>
        <end position="36"/>
    </location>
</feature>
<feature type="strand" evidence="14">
    <location>
        <begin position="39"/>
        <end position="43"/>
    </location>
</feature>
<feature type="helix" evidence="14">
    <location>
        <begin position="49"/>
        <end position="55"/>
    </location>
</feature>
<feature type="strand" evidence="16">
    <location>
        <begin position="67"/>
        <end position="69"/>
    </location>
</feature>
<feature type="strand" evidence="14">
    <location>
        <begin position="79"/>
        <end position="82"/>
    </location>
</feature>
<feature type="strand" evidence="18">
    <location>
        <begin position="86"/>
        <end position="90"/>
    </location>
</feature>
<feature type="turn" evidence="14">
    <location>
        <begin position="91"/>
        <end position="93"/>
    </location>
</feature>
<feature type="strand" evidence="14">
    <location>
        <begin position="101"/>
        <end position="103"/>
    </location>
</feature>
<feature type="helix" evidence="14">
    <location>
        <begin position="107"/>
        <end position="122"/>
    </location>
</feature>
<feature type="helix" evidence="14">
    <location>
        <begin position="128"/>
        <end position="130"/>
    </location>
</feature>
<feature type="turn" evidence="14">
    <location>
        <begin position="132"/>
        <end position="135"/>
    </location>
</feature>
<feature type="helix" evidence="14">
    <location>
        <begin position="138"/>
        <end position="146"/>
    </location>
</feature>
<feature type="strand" evidence="14">
    <location>
        <begin position="167"/>
        <end position="171"/>
    </location>
</feature>
<feature type="helix" evidence="14">
    <location>
        <begin position="173"/>
        <end position="175"/>
    </location>
</feature>
<feature type="helix" evidence="14">
    <location>
        <begin position="181"/>
        <end position="188"/>
    </location>
</feature>
<feature type="strand" evidence="14">
    <location>
        <begin position="196"/>
        <end position="199"/>
    </location>
</feature>
<feature type="helix" evidence="14">
    <location>
        <begin position="201"/>
        <end position="203"/>
    </location>
</feature>
<feature type="strand" evidence="14">
    <location>
        <begin position="205"/>
        <end position="207"/>
    </location>
</feature>
<feature type="strand" evidence="14">
    <location>
        <begin position="209"/>
        <end position="211"/>
    </location>
</feature>
<feature type="turn" evidence="14">
    <location>
        <begin position="217"/>
        <end position="220"/>
    </location>
</feature>
<feature type="helix" evidence="14">
    <location>
        <begin position="221"/>
        <end position="225"/>
    </location>
</feature>
<feature type="strand" evidence="20">
    <location>
        <begin position="226"/>
        <end position="228"/>
    </location>
</feature>
<feature type="strand" evidence="14">
    <location>
        <begin position="231"/>
        <end position="233"/>
    </location>
</feature>
<feature type="turn" evidence="14">
    <location>
        <begin position="234"/>
        <end position="238"/>
    </location>
</feature>
<feature type="helix" evidence="14">
    <location>
        <begin position="242"/>
        <end position="244"/>
    </location>
</feature>
<feature type="strand" evidence="14">
    <location>
        <begin position="246"/>
        <end position="251"/>
    </location>
</feature>
<feature type="strand" evidence="14">
    <location>
        <begin position="254"/>
        <end position="257"/>
    </location>
</feature>
<feature type="strand" evidence="14">
    <location>
        <begin position="260"/>
        <end position="266"/>
    </location>
</feature>
<feature type="strand" evidence="14">
    <location>
        <begin position="269"/>
        <end position="275"/>
    </location>
</feature>
<feature type="turn" evidence="14">
    <location>
        <begin position="279"/>
        <end position="282"/>
    </location>
</feature>
<feature type="helix" evidence="14">
    <location>
        <begin position="288"/>
        <end position="292"/>
    </location>
</feature>
<feature type="helix" evidence="14">
    <location>
        <begin position="293"/>
        <end position="298"/>
    </location>
</feature>
<feature type="strand" evidence="14">
    <location>
        <begin position="299"/>
        <end position="301"/>
    </location>
</feature>
<feature type="strand" evidence="14">
    <location>
        <begin position="306"/>
        <end position="308"/>
    </location>
</feature>
<feature type="strand" evidence="14">
    <location>
        <begin position="314"/>
        <end position="316"/>
    </location>
</feature>
<feature type="helix" evidence="14">
    <location>
        <begin position="319"/>
        <end position="331"/>
    </location>
</feature>
<feature type="helix" evidence="14">
    <location>
        <begin position="335"/>
        <end position="337"/>
    </location>
</feature>
<feature type="strand" evidence="14">
    <location>
        <begin position="338"/>
        <end position="342"/>
    </location>
</feature>
<feature type="helix" evidence="14">
    <location>
        <begin position="348"/>
        <end position="360"/>
    </location>
</feature>
<feature type="strand" evidence="14">
    <location>
        <begin position="366"/>
        <end position="370"/>
    </location>
</feature>
<feature type="turn" evidence="14">
    <location>
        <begin position="376"/>
        <end position="379"/>
    </location>
</feature>
<feature type="helix" evidence="14">
    <location>
        <begin position="382"/>
        <end position="384"/>
    </location>
</feature>
<feature type="strand" evidence="14">
    <location>
        <begin position="385"/>
        <end position="387"/>
    </location>
</feature>
<feature type="helix" evidence="14">
    <location>
        <begin position="392"/>
        <end position="396"/>
    </location>
</feature>
<feature type="strand" evidence="14">
    <location>
        <begin position="398"/>
        <end position="404"/>
    </location>
</feature>
<feature type="helix" evidence="14">
    <location>
        <begin position="407"/>
        <end position="410"/>
    </location>
</feature>
<feature type="helix" evidence="14">
    <location>
        <begin position="412"/>
        <end position="424"/>
    </location>
</feature>
<feature type="strand" evidence="14">
    <location>
        <begin position="428"/>
        <end position="434"/>
    </location>
</feature>
<feature type="strand" evidence="14">
    <location>
        <begin position="443"/>
        <end position="447"/>
    </location>
</feature>
<feature type="helix" evidence="14">
    <location>
        <begin position="451"/>
        <end position="457"/>
    </location>
</feature>
<feature type="helix" evidence="14">
    <location>
        <begin position="462"/>
        <end position="468"/>
    </location>
</feature>
<feature type="strand" evidence="14">
    <location>
        <begin position="470"/>
        <end position="477"/>
    </location>
</feature>
<feature type="helix" evidence="14">
    <location>
        <begin position="478"/>
        <end position="482"/>
    </location>
</feature>
<feature type="strand" evidence="21">
    <location>
        <begin position="483"/>
        <end position="485"/>
    </location>
</feature>
<feature type="helix" evidence="14">
    <location>
        <begin position="486"/>
        <end position="501"/>
    </location>
</feature>
<feature type="strand" evidence="18">
    <location>
        <begin position="503"/>
        <end position="506"/>
    </location>
</feature>
<feature type="strand" evidence="15">
    <location>
        <begin position="508"/>
        <end position="510"/>
    </location>
</feature>
<feature type="strand" evidence="14">
    <location>
        <begin position="513"/>
        <end position="516"/>
    </location>
</feature>
<feature type="helix" evidence="14">
    <location>
        <begin position="522"/>
        <end position="527"/>
    </location>
</feature>
<feature type="strand" evidence="14">
    <location>
        <begin position="531"/>
        <end position="534"/>
    </location>
</feature>
<feature type="helix" evidence="14">
    <location>
        <begin position="535"/>
        <end position="539"/>
    </location>
</feature>
<feature type="strand" evidence="14">
    <location>
        <begin position="543"/>
        <end position="549"/>
    </location>
</feature>
<feature type="helix" evidence="14">
    <location>
        <begin position="557"/>
        <end position="559"/>
    </location>
</feature>
<feature type="strand" evidence="14">
    <location>
        <begin position="565"/>
        <end position="572"/>
    </location>
</feature>
<feature type="strand" evidence="14">
    <location>
        <begin position="574"/>
        <end position="576"/>
    </location>
</feature>
<feature type="helix" evidence="14">
    <location>
        <begin position="577"/>
        <end position="579"/>
    </location>
</feature>
<feature type="strand" evidence="14">
    <location>
        <begin position="581"/>
        <end position="586"/>
    </location>
</feature>
<feature type="helix" evidence="14">
    <location>
        <begin position="589"/>
        <end position="591"/>
    </location>
</feature>
<feature type="strand" evidence="14">
    <location>
        <begin position="595"/>
        <end position="597"/>
    </location>
</feature>
<feature type="strand" evidence="14">
    <location>
        <begin position="603"/>
        <end position="605"/>
    </location>
</feature>
<feature type="strand" evidence="19">
    <location>
        <begin position="613"/>
        <end position="615"/>
    </location>
</feature>
<feature type="helix" evidence="14">
    <location>
        <begin position="619"/>
        <end position="629"/>
    </location>
</feature>
<feature type="helix" evidence="14">
    <location>
        <begin position="639"/>
        <end position="649"/>
    </location>
</feature>
<feature type="helix" evidence="14">
    <location>
        <begin position="651"/>
        <end position="654"/>
    </location>
</feature>
<feature type="helix" evidence="14">
    <location>
        <begin position="665"/>
        <end position="672"/>
    </location>
</feature>
<feature type="strand" evidence="17">
    <location>
        <begin position="673"/>
        <end position="675"/>
    </location>
</feature>
<feature type="helix" evidence="14">
    <location>
        <begin position="691"/>
        <end position="693"/>
    </location>
</feature>
<feature type="helix" evidence="14">
    <location>
        <begin position="699"/>
        <end position="703"/>
    </location>
</feature>
<feature type="helix" evidence="14">
    <location>
        <begin position="705"/>
        <end position="715"/>
    </location>
</feature>
<feature type="turn" evidence="13">
    <location>
        <begin position="718"/>
        <end position="721"/>
    </location>
</feature>
<comment type="function">
    <text evidence="1 7 8">Core subunit of the mitochondrial membrane respiratory chain NADH dehydrogenase (Complex I) which catalyzes electron transfer from NADH through the respiratory chain, using ubiquinone as an electron acceptor (PubMed:10852722, PubMed:18721790). Essential for catalysing the entry and efficient transfer of electrons within complex I (By similarity). Plays a key role in the assembly and stability of complex I and participates in the association of complex I with ubiquinol-cytochrome reductase complex (Complex III) to form supercomplexes (By similarity).</text>
</comment>
<comment type="catalytic activity">
    <reaction evidence="1">
        <text>a ubiquinone + NADH + 5 H(+)(in) = a ubiquinol + NAD(+) + 4 H(+)(out)</text>
        <dbReference type="Rhea" id="RHEA:29091"/>
        <dbReference type="Rhea" id="RHEA-COMP:9565"/>
        <dbReference type="Rhea" id="RHEA-COMP:9566"/>
        <dbReference type="ChEBI" id="CHEBI:15378"/>
        <dbReference type="ChEBI" id="CHEBI:16389"/>
        <dbReference type="ChEBI" id="CHEBI:17976"/>
        <dbReference type="ChEBI" id="CHEBI:57540"/>
        <dbReference type="ChEBI" id="CHEBI:57945"/>
        <dbReference type="EC" id="7.1.1.2"/>
    </reaction>
</comment>
<comment type="cofactor">
    <cofactor evidence="2">
        <name>[2Fe-2S] cluster</name>
        <dbReference type="ChEBI" id="CHEBI:190135"/>
    </cofactor>
    <text evidence="2">Binds 1 [2Fe-2S] cluster per subunit.</text>
</comment>
<comment type="cofactor">
    <cofactor evidence="2">
        <name>[4Fe-4S] cluster</name>
        <dbReference type="ChEBI" id="CHEBI:49883"/>
    </cofactor>
    <text evidence="2">Binds 2 [4Fe-4S] clusters per subunit.</text>
</comment>
<comment type="subunit">
    <text evidence="1 3 7 8 10">Core subunit of respiratory chain NADH dehydrogenase (Complex I) which is composed of 45 different subunits (PubMed:10852722, PubMed:18721790, PubMed:25209663). This is the largest subunit of complex I and it is a component of the iron-sulfur (IP) fragment of the enzyme (PubMed:10852722, PubMed:25209663). Complex I associates with ubiquinol-cytochrome reductase complex (Complex III) to form supercomplexes (By similarity). Interacts with MDM2 and AKAP1 (By similarity).</text>
</comment>
<comment type="subcellular location">
    <subcellularLocation>
        <location evidence="7 8 10">Mitochondrion inner membrane</location>
        <topology evidence="12">Peripheral membrane protein</topology>
        <orientation evidence="12">Matrix side</orientation>
    </subcellularLocation>
</comment>
<comment type="similarity">
    <text evidence="11">Belongs to the complex I 75 kDa subunit family.</text>
</comment>
<reference key="1">
    <citation type="journal article" date="1989" name="Biochemistry">
        <title>Mitochondrial NADH:ubiquinone reductase: complementary DNA sequence of the import precursor of the bovine 75-kDa subunit.</title>
        <authorList>
            <person name="Runswick M.J."/>
            <person name="Gennis R.B."/>
            <person name="Fearnley I.M."/>
            <person name="Walker J.E."/>
        </authorList>
    </citation>
    <scope>NUCLEOTIDE SEQUENCE [MRNA]</scope>
    <scope>PARTIAL PROTEIN SEQUENCE</scope>
</reference>
<reference key="2">
    <citation type="submission" date="2006-08" db="EMBL/GenBank/DDBJ databases">
        <authorList>
            <consortium name="NIH - Mammalian Gene Collection (MGC) project"/>
        </authorList>
    </citation>
    <scope>NUCLEOTIDE SEQUENCE [LARGE SCALE MRNA]</scope>
    <source>
        <strain>Hereford</strain>
        <tissue>Fetal pons</tissue>
    </source>
</reference>
<reference key="3">
    <citation type="journal article" date="2000" name="Biochemistry">
        <title>Resolution of the membrane domain of bovine complex I into subcomplexes: implications for the structural organization of the enzyme.</title>
        <authorList>
            <person name="Sazanov L.A."/>
            <person name="Peak-Chew S.Y."/>
            <person name="Fearnley I.M."/>
            <person name="Walker J.E."/>
        </authorList>
    </citation>
    <scope>PARTIAL PROTEIN SEQUENCE</scope>
    <scope>SUBUNIT</scope>
    <scope>IDENTIFICATION IN COMPLEX I</scope>
    <scope>SUBCELLULAR LOCATION</scope>
    <scope>FUNCTION</scope>
</reference>
<reference key="4">
    <citation type="journal article" date="2008" name="Anal. Biochem.">
        <title>Subunit analysis of bovine heart complex I by reversed-phase high-performance liquid chromatography, electrospray ionization-tandem mass spectrometry, and matrix-assisted laser desorption/ionization-time-of-flight mass spectrometry.</title>
        <authorList>
            <person name="Lemma-Gray P."/>
            <person name="Valusova E."/>
            <person name="Carroll C.A."/>
            <person name="Weintraub S.T."/>
            <person name="Musatov A."/>
            <person name="Robinson N.C."/>
        </authorList>
    </citation>
    <scope>SUBUNIT</scope>
    <scope>IDENTIFICATION IN COMPLEX I</scope>
    <scope>SUBCELLULAR LOCATION</scope>
    <scope>FUNCTION</scope>
</reference>
<reference key="5">
    <citation type="journal article" date="2014" name="Nature">
        <title>Architecture of mammalian respiratory complex I.</title>
        <authorList>
            <person name="Vinothkumar K.R."/>
            <person name="Zhu J."/>
            <person name="Hirst J."/>
        </authorList>
    </citation>
    <scope>SUBUNIT</scope>
    <scope>SUBCELLULAR LOCATION</scope>
    <scope>TOPOLOGY</scope>
</reference>
<organism>
    <name type="scientific">Bos taurus</name>
    <name type="common">Bovine</name>
    <dbReference type="NCBI Taxonomy" id="9913"/>
    <lineage>
        <taxon>Eukaryota</taxon>
        <taxon>Metazoa</taxon>
        <taxon>Chordata</taxon>
        <taxon>Craniata</taxon>
        <taxon>Vertebrata</taxon>
        <taxon>Euteleostomi</taxon>
        <taxon>Mammalia</taxon>
        <taxon>Eutheria</taxon>
        <taxon>Laurasiatheria</taxon>
        <taxon>Artiodactyla</taxon>
        <taxon>Ruminantia</taxon>
        <taxon>Pecora</taxon>
        <taxon>Bovidae</taxon>
        <taxon>Bovinae</taxon>
        <taxon>Bos</taxon>
    </lineage>
</organism>
<sequence>MLRIPVRKALVGLSKSSKGCVRTTATAASNLIEVFVDGQSVMVEPGTTVLQACEKVGMQIPRFCYHERLSVAGNCRMCLVEIEKAPKVVAACAMPVMKGWNILTNSEKTKKAREGVMEFLLANHPLDCPICDQGGECDLQDQSMMFGSDRSRFLEGKRAVEDKNIGPLVKTIMTRCIQCTRCIRFASEIAGVDDLGTTGRGNDMQVGTYIEKMFMSELSGNIIDICPVGALTSKPYAFTARPWETRKTESIDVMDAVGSNIVVSTRTGEVMRILPRMHEDINEEWISDKTRFAYDGLKRQRLTEPMVRNEKGLLTHTTWEDALSRVAGMLQSFQGNDVAAIAGGLVDAEALIALKDLLNRVDSDTLCTEEVFPTAGAGTDLRSNYLLNTTIAGVEEADVVLLVGTNPRFEAPLFNARIRKSWLHNDLKVALIGSPVDLTYRYDHLGDSPKILQDIASGSHPFSQVLQEAKKPMVILGSSALQRNDGAAILAAVSNIAQKIRTSSGVTGDWKVMNILHRIASQVAALDLGYKPGVEAIQKNPPKMLFLLGADGGCITRQDLPKDCFIVYQGHHGDVGAPIADVILPGAAYTEKSATYVNTEGRAQQTKVAVTPPGLAREDWKIIRALSEIAGMTLPYDTLDQVRNRLEEVSPNLVRYDDVEGANYFQQASELSKLVNQQLLADPLVPPQLTIKDFYMTDSISRASQTMAKCVKAVTEGAHAVEEPSIC</sequence>